<keyword id="KW-0010">Activator</keyword>
<keyword id="KW-0963">Cytoplasm</keyword>
<keyword id="KW-0678">Repressor</keyword>
<keyword id="KW-0694">RNA-binding</keyword>
<keyword id="KW-0810">Translation regulation</keyword>
<name>CSRA_ECOSM</name>
<accession>B1LQ13</accession>
<proteinExistence type="inferred from homology"/>
<comment type="function">
    <text evidence="1">A key translational regulator that binds mRNA to regulate translation initiation and/or mRNA stability. Mediates global changes in gene expression, shifting from rapid growth to stress survival by linking envelope stress, the stringent response and the catabolite repression systems. Usually binds in the 5'-UTR; binding at or near the Shine-Dalgarno sequence prevents ribosome-binding, repressing translation, binding elsewhere in the 5'-UTR can activate translation and/or stabilize the mRNA. Its function is antagonized by small RNA(s).</text>
</comment>
<comment type="subunit">
    <text evidence="1">Homodimer; the beta-strands of each monomer intercalate to form a hydrophobic core, while the alpha-helices form wings that extend away from the core.</text>
</comment>
<comment type="subcellular location">
    <subcellularLocation>
        <location evidence="1">Cytoplasm</location>
    </subcellularLocation>
</comment>
<comment type="similarity">
    <text evidence="1">Belongs to the CsrA/RsmA family.</text>
</comment>
<dbReference type="EMBL" id="CP000970">
    <property type="protein sequence ID" value="ACB18886.1"/>
    <property type="molecule type" value="Genomic_DNA"/>
</dbReference>
<dbReference type="RefSeq" id="WP_000906486.1">
    <property type="nucleotide sequence ID" value="NC_010498.1"/>
</dbReference>
<dbReference type="SMR" id="B1LQ13"/>
<dbReference type="GeneID" id="98389839"/>
<dbReference type="KEGG" id="ecm:EcSMS35_2818"/>
<dbReference type="HOGENOM" id="CLU_164837_2_1_6"/>
<dbReference type="Proteomes" id="UP000007011">
    <property type="component" value="Chromosome"/>
</dbReference>
<dbReference type="GO" id="GO:0005829">
    <property type="term" value="C:cytosol"/>
    <property type="evidence" value="ECO:0007669"/>
    <property type="project" value="TreeGrafter"/>
</dbReference>
<dbReference type="GO" id="GO:0048027">
    <property type="term" value="F:mRNA 5'-UTR binding"/>
    <property type="evidence" value="ECO:0007669"/>
    <property type="project" value="UniProtKB-UniRule"/>
</dbReference>
<dbReference type="GO" id="GO:0006402">
    <property type="term" value="P:mRNA catabolic process"/>
    <property type="evidence" value="ECO:0007669"/>
    <property type="project" value="InterPro"/>
</dbReference>
<dbReference type="GO" id="GO:0045947">
    <property type="term" value="P:negative regulation of translational initiation"/>
    <property type="evidence" value="ECO:0007669"/>
    <property type="project" value="UniProtKB-UniRule"/>
</dbReference>
<dbReference type="GO" id="GO:0045948">
    <property type="term" value="P:positive regulation of translational initiation"/>
    <property type="evidence" value="ECO:0007669"/>
    <property type="project" value="UniProtKB-UniRule"/>
</dbReference>
<dbReference type="GO" id="GO:0006109">
    <property type="term" value="P:regulation of carbohydrate metabolic process"/>
    <property type="evidence" value="ECO:0007669"/>
    <property type="project" value="UniProtKB-UniRule"/>
</dbReference>
<dbReference type="FunFam" id="2.60.40.4380:FF:000001">
    <property type="entry name" value="Translational regulator CsrA"/>
    <property type="match status" value="1"/>
</dbReference>
<dbReference type="Gene3D" id="2.60.40.4380">
    <property type="entry name" value="Translational regulator CsrA"/>
    <property type="match status" value="1"/>
</dbReference>
<dbReference type="HAMAP" id="MF_00167">
    <property type="entry name" value="CsrA"/>
    <property type="match status" value="1"/>
</dbReference>
<dbReference type="InterPro" id="IPR003751">
    <property type="entry name" value="CsrA"/>
</dbReference>
<dbReference type="InterPro" id="IPR036107">
    <property type="entry name" value="CsrA_sf"/>
</dbReference>
<dbReference type="NCBIfam" id="TIGR00202">
    <property type="entry name" value="csrA"/>
    <property type="match status" value="1"/>
</dbReference>
<dbReference type="NCBIfam" id="NF002469">
    <property type="entry name" value="PRK01712.1"/>
    <property type="match status" value="1"/>
</dbReference>
<dbReference type="PANTHER" id="PTHR34984">
    <property type="entry name" value="CARBON STORAGE REGULATOR"/>
    <property type="match status" value="1"/>
</dbReference>
<dbReference type="PANTHER" id="PTHR34984:SF1">
    <property type="entry name" value="CARBON STORAGE REGULATOR"/>
    <property type="match status" value="1"/>
</dbReference>
<dbReference type="Pfam" id="PF02599">
    <property type="entry name" value="CsrA"/>
    <property type="match status" value="1"/>
</dbReference>
<dbReference type="SUPFAM" id="SSF117130">
    <property type="entry name" value="CsrA-like"/>
    <property type="match status" value="1"/>
</dbReference>
<evidence type="ECO:0000255" key="1">
    <source>
        <dbReference type="HAMAP-Rule" id="MF_00167"/>
    </source>
</evidence>
<protein>
    <recommendedName>
        <fullName evidence="1">Translational regulator CsrA</fullName>
    </recommendedName>
    <alternativeName>
        <fullName evidence="1">Carbon storage regulator</fullName>
    </alternativeName>
</protein>
<organism>
    <name type="scientific">Escherichia coli (strain SMS-3-5 / SECEC)</name>
    <dbReference type="NCBI Taxonomy" id="439855"/>
    <lineage>
        <taxon>Bacteria</taxon>
        <taxon>Pseudomonadati</taxon>
        <taxon>Pseudomonadota</taxon>
        <taxon>Gammaproteobacteria</taxon>
        <taxon>Enterobacterales</taxon>
        <taxon>Enterobacteriaceae</taxon>
        <taxon>Escherichia</taxon>
    </lineage>
</organism>
<gene>
    <name evidence="1" type="primary">csrA</name>
    <name type="ordered locus">EcSMS35_2818</name>
</gene>
<sequence length="61" mass="6856">MLILTRRVGETLMIGDEVTVTVLGVKGNQVRIGVNAPKEVSVHREEIYQRIQAEKSQQSSY</sequence>
<feature type="chain" id="PRO_1000118238" description="Translational regulator CsrA">
    <location>
        <begin position="1"/>
        <end position="61"/>
    </location>
</feature>
<reference key="1">
    <citation type="journal article" date="2008" name="J. Bacteriol.">
        <title>Insights into the environmental resistance gene pool from the genome sequence of the multidrug-resistant environmental isolate Escherichia coli SMS-3-5.</title>
        <authorList>
            <person name="Fricke W.F."/>
            <person name="Wright M.S."/>
            <person name="Lindell A.H."/>
            <person name="Harkins D.M."/>
            <person name="Baker-Austin C."/>
            <person name="Ravel J."/>
            <person name="Stepanauskas R."/>
        </authorList>
    </citation>
    <scope>NUCLEOTIDE SEQUENCE [LARGE SCALE GENOMIC DNA]</scope>
    <source>
        <strain>SMS-3-5 / SECEC</strain>
    </source>
</reference>